<organism>
    <name type="scientific">Pseudomonas fluorescens (strain SBW25)</name>
    <dbReference type="NCBI Taxonomy" id="216595"/>
    <lineage>
        <taxon>Bacteria</taxon>
        <taxon>Pseudomonadati</taxon>
        <taxon>Pseudomonadota</taxon>
        <taxon>Gammaproteobacteria</taxon>
        <taxon>Pseudomonadales</taxon>
        <taxon>Pseudomonadaceae</taxon>
        <taxon>Pseudomonas</taxon>
    </lineage>
</organism>
<keyword id="KW-0067">ATP-binding</keyword>
<keyword id="KW-0460">Magnesium</keyword>
<keyword id="KW-0547">Nucleotide-binding</keyword>
<keyword id="KW-0808">Transferase</keyword>
<keyword id="KW-0819">tRNA processing</keyword>
<name>MIAA_PSEFS</name>
<dbReference type="EC" id="2.5.1.75" evidence="1"/>
<dbReference type="EMBL" id="AM181176">
    <property type="protein sequence ID" value="CAY46794.1"/>
    <property type="molecule type" value="Genomic_DNA"/>
</dbReference>
<dbReference type="RefSeq" id="WP_012721914.1">
    <property type="nucleotide sequence ID" value="NC_012660.1"/>
</dbReference>
<dbReference type="SMR" id="C3KDW2"/>
<dbReference type="STRING" id="294.SRM1_00581"/>
<dbReference type="PATRIC" id="fig|216595.4.peg.757"/>
<dbReference type="eggNOG" id="COG0324">
    <property type="taxonomic scope" value="Bacteria"/>
</dbReference>
<dbReference type="HOGENOM" id="CLU_032616_0_0_6"/>
<dbReference type="OrthoDB" id="9776390at2"/>
<dbReference type="GO" id="GO:0005524">
    <property type="term" value="F:ATP binding"/>
    <property type="evidence" value="ECO:0007669"/>
    <property type="project" value="UniProtKB-UniRule"/>
</dbReference>
<dbReference type="GO" id="GO:0052381">
    <property type="term" value="F:tRNA dimethylallyltransferase activity"/>
    <property type="evidence" value="ECO:0007669"/>
    <property type="project" value="UniProtKB-UniRule"/>
</dbReference>
<dbReference type="GO" id="GO:0006400">
    <property type="term" value="P:tRNA modification"/>
    <property type="evidence" value="ECO:0007669"/>
    <property type="project" value="TreeGrafter"/>
</dbReference>
<dbReference type="FunFam" id="1.10.20.140:FF:000001">
    <property type="entry name" value="tRNA dimethylallyltransferase"/>
    <property type="match status" value="1"/>
</dbReference>
<dbReference type="Gene3D" id="1.10.20.140">
    <property type="match status" value="1"/>
</dbReference>
<dbReference type="Gene3D" id="3.40.50.300">
    <property type="entry name" value="P-loop containing nucleotide triphosphate hydrolases"/>
    <property type="match status" value="1"/>
</dbReference>
<dbReference type="HAMAP" id="MF_00185">
    <property type="entry name" value="IPP_trans"/>
    <property type="match status" value="1"/>
</dbReference>
<dbReference type="InterPro" id="IPR039657">
    <property type="entry name" value="Dimethylallyltransferase"/>
</dbReference>
<dbReference type="InterPro" id="IPR018022">
    <property type="entry name" value="IPT"/>
</dbReference>
<dbReference type="InterPro" id="IPR027417">
    <property type="entry name" value="P-loop_NTPase"/>
</dbReference>
<dbReference type="NCBIfam" id="TIGR00174">
    <property type="entry name" value="miaA"/>
    <property type="match status" value="1"/>
</dbReference>
<dbReference type="PANTHER" id="PTHR11088">
    <property type="entry name" value="TRNA DIMETHYLALLYLTRANSFERASE"/>
    <property type="match status" value="1"/>
</dbReference>
<dbReference type="PANTHER" id="PTHR11088:SF60">
    <property type="entry name" value="TRNA DIMETHYLALLYLTRANSFERASE"/>
    <property type="match status" value="1"/>
</dbReference>
<dbReference type="Pfam" id="PF01715">
    <property type="entry name" value="IPPT"/>
    <property type="match status" value="1"/>
</dbReference>
<dbReference type="SUPFAM" id="SSF52540">
    <property type="entry name" value="P-loop containing nucleoside triphosphate hydrolases"/>
    <property type="match status" value="1"/>
</dbReference>
<proteinExistence type="inferred from homology"/>
<feature type="chain" id="PRO_1000203942" description="tRNA dimethylallyltransferase">
    <location>
        <begin position="1"/>
        <end position="323"/>
    </location>
</feature>
<feature type="region of interest" description="Interaction with substrate tRNA" evidence="1">
    <location>
        <begin position="37"/>
        <end position="40"/>
    </location>
</feature>
<feature type="region of interest" description="Interaction with substrate tRNA" evidence="1">
    <location>
        <begin position="161"/>
        <end position="165"/>
    </location>
</feature>
<feature type="binding site" evidence="1">
    <location>
        <begin position="12"/>
        <end position="19"/>
    </location>
    <ligand>
        <name>ATP</name>
        <dbReference type="ChEBI" id="CHEBI:30616"/>
    </ligand>
</feature>
<feature type="binding site" evidence="1">
    <location>
        <begin position="14"/>
        <end position="19"/>
    </location>
    <ligand>
        <name>substrate</name>
    </ligand>
</feature>
<feature type="site" description="Interaction with substrate tRNA" evidence="1">
    <location>
        <position position="103"/>
    </location>
</feature>
<feature type="site" description="Interaction with substrate tRNA" evidence="1">
    <location>
        <position position="125"/>
    </location>
</feature>
<evidence type="ECO:0000255" key="1">
    <source>
        <dbReference type="HAMAP-Rule" id="MF_00185"/>
    </source>
</evidence>
<accession>C3KDW2</accession>
<protein>
    <recommendedName>
        <fullName evidence="1">tRNA dimethylallyltransferase</fullName>
        <ecNumber evidence="1">2.5.1.75</ecNumber>
    </recommendedName>
    <alternativeName>
        <fullName evidence="1">Dimethylallyl diphosphate:tRNA dimethylallyltransferase</fullName>
        <shortName evidence="1">DMAPP:tRNA dimethylallyltransferase</shortName>
        <shortName evidence="1">DMATase</shortName>
    </alternativeName>
    <alternativeName>
        <fullName evidence="1">Isopentenyl-diphosphate:tRNA isopentenyltransferase</fullName>
        <shortName evidence="1">IPP transferase</shortName>
        <shortName evidence="1">IPPT</shortName>
        <shortName evidence="1">IPTase</shortName>
    </alternativeName>
</protein>
<sequence length="323" mass="35382">MSALPPAIFLMGPTAAGKTDLAIELTKVLPCELISVDSALVYRDMDIGTAKPSKALLAQYPHKLIDIIDPAESYSAADFRTDALAAMAEITARGNIPLLVGGTMLYYKALQEGLADMPAADAQVRAELEEEAARLGWQALHDQLAAIDPVSAARIHPNDPQRLSRALEVWRVSGQTMTEHRLKQSAQSADAGASGQSQLPYTVANLAIAPANRQVLHERIAQRFTIMLEQGFVDEVVALRSRGDLHPGLPSIRAVGYRQVWDHLDGKLTSAEMQERGIIATRQLAKRQFTWLRSWSDLHWLDSLDSDNLSRALKYLGTVSILS</sequence>
<gene>
    <name evidence="1" type="primary">miaA</name>
    <name type="ordered locus">PFLU_0519</name>
</gene>
<reference key="1">
    <citation type="journal article" date="2009" name="Genome Biol.">
        <title>Genomic and genetic analyses of diversity and plant interactions of Pseudomonas fluorescens.</title>
        <authorList>
            <person name="Silby M.W."/>
            <person name="Cerdeno-Tarraga A.M."/>
            <person name="Vernikos G.S."/>
            <person name="Giddens S.R."/>
            <person name="Jackson R.W."/>
            <person name="Preston G.M."/>
            <person name="Zhang X.-X."/>
            <person name="Moon C.D."/>
            <person name="Gehrig S.M."/>
            <person name="Godfrey S.A.C."/>
            <person name="Knight C.G."/>
            <person name="Malone J.G."/>
            <person name="Robinson Z."/>
            <person name="Spiers A.J."/>
            <person name="Harris S."/>
            <person name="Challis G.L."/>
            <person name="Yaxley A.M."/>
            <person name="Harris D."/>
            <person name="Seeger K."/>
            <person name="Murphy L."/>
            <person name="Rutter S."/>
            <person name="Squares R."/>
            <person name="Quail M.A."/>
            <person name="Saunders E."/>
            <person name="Mavromatis K."/>
            <person name="Brettin T.S."/>
            <person name="Bentley S.D."/>
            <person name="Hothersall J."/>
            <person name="Stephens E."/>
            <person name="Thomas C.M."/>
            <person name="Parkhill J."/>
            <person name="Levy S.B."/>
            <person name="Rainey P.B."/>
            <person name="Thomson N.R."/>
        </authorList>
    </citation>
    <scope>NUCLEOTIDE SEQUENCE [LARGE SCALE GENOMIC DNA]</scope>
    <source>
        <strain>SBW25</strain>
    </source>
</reference>
<comment type="function">
    <text evidence="1">Catalyzes the transfer of a dimethylallyl group onto the adenine at position 37 in tRNAs that read codons beginning with uridine, leading to the formation of N6-(dimethylallyl)adenosine (i(6)A).</text>
</comment>
<comment type="catalytic activity">
    <reaction evidence="1">
        <text>adenosine(37) in tRNA + dimethylallyl diphosphate = N(6)-dimethylallyladenosine(37) in tRNA + diphosphate</text>
        <dbReference type="Rhea" id="RHEA:26482"/>
        <dbReference type="Rhea" id="RHEA-COMP:10162"/>
        <dbReference type="Rhea" id="RHEA-COMP:10375"/>
        <dbReference type="ChEBI" id="CHEBI:33019"/>
        <dbReference type="ChEBI" id="CHEBI:57623"/>
        <dbReference type="ChEBI" id="CHEBI:74411"/>
        <dbReference type="ChEBI" id="CHEBI:74415"/>
        <dbReference type="EC" id="2.5.1.75"/>
    </reaction>
</comment>
<comment type="cofactor">
    <cofactor evidence="1">
        <name>Mg(2+)</name>
        <dbReference type="ChEBI" id="CHEBI:18420"/>
    </cofactor>
</comment>
<comment type="subunit">
    <text evidence="1">Monomer.</text>
</comment>
<comment type="similarity">
    <text evidence="1">Belongs to the IPP transferase family.</text>
</comment>